<protein>
    <recommendedName>
        <fullName evidence="2">Isocitrate dehydrogenase [NADP] 1</fullName>
        <shortName evidence="2">ICDH-1</shortName>
        <shortName evidence="2">IDH 1</shortName>
        <ecNumber evidence="2">1.1.1.42</ecNumber>
    </recommendedName>
    <alternativeName>
        <fullName>IDP</fullName>
    </alternativeName>
    <alternativeName>
        <fullName>NADP(+)-specific ICDH</fullName>
    </alternativeName>
    <alternativeName>
        <fullName>Oxalosuccinate decarboxylase</fullName>
    </alternativeName>
</protein>
<organism>
    <name type="scientific">Mycobacterium bovis (strain ATCC BAA-935 / AF2122/97)</name>
    <dbReference type="NCBI Taxonomy" id="233413"/>
    <lineage>
        <taxon>Bacteria</taxon>
        <taxon>Bacillati</taxon>
        <taxon>Actinomycetota</taxon>
        <taxon>Actinomycetes</taxon>
        <taxon>Mycobacteriales</taxon>
        <taxon>Mycobacteriaceae</taxon>
        <taxon>Mycobacterium</taxon>
        <taxon>Mycobacterium tuberculosis complex</taxon>
    </lineage>
</organism>
<reference key="1">
    <citation type="journal article" date="2003" name="Proc. Natl. Acad. Sci. U.S.A.">
        <title>The complete genome sequence of Mycobacterium bovis.</title>
        <authorList>
            <person name="Garnier T."/>
            <person name="Eiglmeier K."/>
            <person name="Camus J.-C."/>
            <person name="Medina N."/>
            <person name="Mansoor H."/>
            <person name="Pryor M."/>
            <person name="Duthoy S."/>
            <person name="Grondin S."/>
            <person name="Lacroix C."/>
            <person name="Monsempe C."/>
            <person name="Simon S."/>
            <person name="Harris B."/>
            <person name="Atkin R."/>
            <person name="Doggett J."/>
            <person name="Mayes R."/>
            <person name="Keating L."/>
            <person name="Wheeler P.R."/>
            <person name="Parkhill J."/>
            <person name="Barrell B.G."/>
            <person name="Cole S.T."/>
            <person name="Gordon S.V."/>
            <person name="Hewinson R.G."/>
        </authorList>
    </citation>
    <scope>NUCLEOTIDE SEQUENCE [LARGE SCALE GENOMIC DNA]</scope>
    <source>
        <strain>ATCC BAA-935 / AF2122/97</strain>
    </source>
</reference>
<reference key="2">
    <citation type="journal article" date="2017" name="Genome Announc.">
        <title>Updated reference genome sequence and annotation of Mycobacterium bovis AF2122/97.</title>
        <authorList>
            <person name="Malone K.M."/>
            <person name="Farrell D."/>
            <person name="Stuber T.P."/>
            <person name="Schubert O.T."/>
            <person name="Aebersold R."/>
            <person name="Robbe-Austerman S."/>
            <person name="Gordon S.V."/>
        </authorList>
    </citation>
    <scope>NUCLEOTIDE SEQUENCE [LARGE SCALE GENOMIC DNA]</scope>
    <scope>GENOME REANNOTATION</scope>
    <source>
        <strain>ATCC BAA-935 / AF2122/97</strain>
    </source>
</reference>
<evidence type="ECO:0000250" key="1">
    <source>
        <dbReference type="UniProtKB" id="P08200"/>
    </source>
</evidence>
<evidence type="ECO:0000250" key="2">
    <source>
        <dbReference type="UniProtKB" id="P9WKL1"/>
    </source>
</evidence>
<evidence type="ECO:0000305" key="3"/>
<accession>P65098</accession>
<accession>A0A1R3Y3W8</accession>
<accession>O53389</accession>
<accession>X2BNC7</accession>
<proteinExistence type="inferred from homology"/>
<gene>
    <name type="primary">icd</name>
    <name type="ordered locus">BQ2027_MB3371C</name>
</gene>
<keyword id="KW-0329">Glyoxylate bypass</keyword>
<keyword id="KW-0460">Magnesium</keyword>
<keyword id="KW-0464">Manganese</keyword>
<keyword id="KW-0479">Metal-binding</keyword>
<keyword id="KW-0521">NADP</keyword>
<keyword id="KW-0560">Oxidoreductase</keyword>
<keyword id="KW-1185">Reference proteome</keyword>
<keyword id="KW-0816">Tricarboxylic acid cycle</keyword>
<name>IDH1_MYCBO</name>
<sequence length="409" mass="45514">MSNAPKIKVSGPVVELDGDEMTRVIWKLIKDMLILPYLDIRLDYYDLGIEHRDATDDQVTIDAAYAIKKHGVGVKCATITPDEARVEEFNLKKMWLSPNGTIRNILGGTIFREPIVISNVPRLVPGWTKPIVIGRHAFGDQYRATNFKVDQPGTVTLTFTPADGSAPIVHEMVSIPEDGGVVLGMYNFKESIRDFARASFSYGLNAKWPVYLSTKNTILKAYDGMFKDEFERVYEEEFKAQFEAAGLTYEHRLIDDMVAACLKWEGGYVWACKNYDGDVQSDTVAQGYGSLGLMTSVLMTADGKTVEAEAAHGTVTRHYRQYQAGKPTSTNPIASIFAWTRGLQHRGKLDGTPEVIDFAHKLESVVIATVESGKMTKDLAILIGPEQDWLNSEEFLDAIADNLEKELAN</sequence>
<dbReference type="EC" id="1.1.1.42" evidence="2"/>
<dbReference type="EMBL" id="LT708304">
    <property type="protein sequence ID" value="SIU02000.1"/>
    <property type="molecule type" value="Genomic_DNA"/>
</dbReference>
<dbReference type="RefSeq" id="NP_857016.1">
    <property type="nucleotide sequence ID" value="NC_002945.3"/>
</dbReference>
<dbReference type="RefSeq" id="WP_003417452.1">
    <property type="nucleotide sequence ID" value="NC_002945.4"/>
</dbReference>
<dbReference type="SMR" id="P65098"/>
<dbReference type="KEGG" id="mbo:BQ2027_MB3371C"/>
<dbReference type="PATRIC" id="fig|233413.5.peg.3703"/>
<dbReference type="SABIO-RK" id="P65098"/>
<dbReference type="Proteomes" id="UP000001419">
    <property type="component" value="Chromosome"/>
</dbReference>
<dbReference type="GO" id="GO:0004450">
    <property type="term" value="F:isocitrate dehydrogenase (NADP+) activity"/>
    <property type="evidence" value="ECO:0007669"/>
    <property type="project" value="UniProtKB-EC"/>
</dbReference>
<dbReference type="GO" id="GO:0000287">
    <property type="term" value="F:magnesium ion binding"/>
    <property type="evidence" value="ECO:0007669"/>
    <property type="project" value="InterPro"/>
</dbReference>
<dbReference type="GO" id="GO:0051287">
    <property type="term" value="F:NAD binding"/>
    <property type="evidence" value="ECO:0007669"/>
    <property type="project" value="InterPro"/>
</dbReference>
<dbReference type="GO" id="GO:0006097">
    <property type="term" value="P:glyoxylate cycle"/>
    <property type="evidence" value="ECO:0007669"/>
    <property type="project" value="UniProtKB-KW"/>
</dbReference>
<dbReference type="GO" id="GO:0006102">
    <property type="term" value="P:isocitrate metabolic process"/>
    <property type="evidence" value="ECO:0007669"/>
    <property type="project" value="InterPro"/>
</dbReference>
<dbReference type="GO" id="GO:0006099">
    <property type="term" value="P:tricarboxylic acid cycle"/>
    <property type="evidence" value="ECO:0007669"/>
    <property type="project" value="UniProtKB-KW"/>
</dbReference>
<dbReference type="FunFam" id="3.40.718.10:FF:000018">
    <property type="entry name" value="Isocitrate dehydrogenase [NADP]"/>
    <property type="match status" value="1"/>
</dbReference>
<dbReference type="Gene3D" id="3.40.718.10">
    <property type="entry name" value="Isopropylmalate Dehydrogenase"/>
    <property type="match status" value="1"/>
</dbReference>
<dbReference type="InterPro" id="IPR019818">
    <property type="entry name" value="IsoCit/isopropylmalate_DH_CS"/>
</dbReference>
<dbReference type="InterPro" id="IPR004790">
    <property type="entry name" value="Isocitrate_DH_NADP"/>
</dbReference>
<dbReference type="InterPro" id="IPR024084">
    <property type="entry name" value="IsoPropMal-DH-like_dom"/>
</dbReference>
<dbReference type="NCBIfam" id="TIGR00127">
    <property type="entry name" value="nadp_idh_euk"/>
    <property type="match status" value="1"/>
</dbReference>
<dbReference type="NCBIfam" id="NF006156">
    <property type="entry name" value="PRK08299.1"/>
    <property type="match status" value="1"/>
</dbReference>
<dbReference type="PANTHER" id="PTHR11822:SF21">
    <property type="entry name" value="ISOCITRATE DEHYDROGENASE [NADP], MITOCHONDRIAL"/>
    <property type="match status" value="1"/>
</dbReference>
<dbReference type="PANTHER" id="PTHR11822">
    <property type="entry name" value="NADP-SPECIFIC ISOCITRATE DEHYDROGENASE"/>
    <property type="match status" value="1"/>
</dbReference>
<dbReference type="Pfam" id="PF00180">
    <property type="entry name" value="Iso_dh"/>
    <property type="match status" value="1"/>
</dbReference>
<dbReference type="PIRSF" id="PIRSF000108">
    <property type="entry name" value="IDH_NADP"/>
    <property type="match status" value="1"/>
</dbReference>
<dbReference type="SMART" id="SM01329">
    <property type="entry name" value="Iso_dh"/>
    <property type="match status" value="1"/>
</dbReference>
<dbReference type="SUPFAM" id="SSF53659">
    <property type="entry name" value="Isocitrate/Isopropylmalate dehydrogenase-like"/>
    <property type="match status" value="1"/>
</dbReference>
<dbReference type="PROSITE" id="PS00470">
    <property type="entry name" value="IDH_IMDH"/>
    <property type="match status" value="1"/>
</dbReference>
<comment type="function">
    <text evidence="2">Catalyzes the oxidative decarboxylation of isocitrate to 2-oxoglutarate and carbon dioxide with the concomitant reduction of NADP(+).</text>
</comment>
<comment type="catalytic activity">
    <reaction evidence="2">
        <text>D-threo-isocitrate + NADP(+) = 2-oxoglutarate + CO2 + NADPH</text>
        <dbReference type="Rhea" id="RHEA:19629"/>
        <dbReference type="ChEBI" id="CHEBI:15562"/>
        <dbReference type="ChEBI" id="CHEBI:16526"/>
        <dbReference type="ChEBI" id="CHEBI:16810"/>
        <dbReference type="ChEBI" id="CHEBI:57783"/>
        <dbReference type="ChEBI" id="CHEBI:58349"/>
        <dbReference type="EC" id="1.1.1.42"/>
    </reaction>
</comment>
<comment type="cofactor">
    <cofactor evidence="2">
        <name>Mg(2+)</name>
        <dbReference type="ChEBI" id="CHEBI:18420"/>
    </cofactor>
    <cofactor evidence="2">
        <name>Mn(2+)</name>
        <dbReference type="ChEBI" id="CHEBI:29035"/>
    </cofactor>
    <text evidence="2">Binds 1 Mg(2+) or Mn(2+) ion per subunit.</text>
</comment>
<comment type="subunit">
    <text evidence="2">Homodimer.</text>
</comment>
<comment type="similarity">
    <text evidence="3">Belongs to the isocitrate and isopropylmalate dehydrogenases family.</text>
</comment>
<feature type="chain" id="PRO_0000083554" description="Isocitrate dehydrogenase [NADP] 1">
    <location>
        <begin position="1"/>
        <end position="409"/>
    </location>
</feature>
<feature type="binding site" evidence="2">
    <location>
        <position position="75"/>
    </location>
    <ligand>
        <name>NADP(+)</name>
        <dbReference type="ChEBI" id="CHEBI:58349"/>
    </ligand>
</feature>
<feature type="binding site" evidence="2">
    <location>
        <position position="78"/>
    </location>
    <ligand>
        <name>NADP(+)</name>
        <dbReference type="ChEBI" id="CHEBI:58349"/>
    </ligand>
</feature>
<feature type="binding site" evidence="2">
    <location>
        <position position="80"/>
    </location>
    <ligand>
        <name>NADP(+)</name>
        <dbReference type="ChEBI" id="CHEBI:58349"/>
    </ligand>
</feature>
<feature type="binding site" evidence="2">
    <location>
        <position position="85"/>
    </location>
    <ligand>
        <name>NADP(+)</name>
        <dbReference type="ChEBI" id="CHEBI:58349"/>
    </ligand>
</feature>
<feature type="binding site" evidence="2">
    <location>
        <position position="255"/>
    </location>
    <ligand>
        <name>Mn(2+)</name>
        <dbReference type="ChEBI" id="CHEBI:29035"/>
    </ligand>
</feature>
<feature type="binding site" evidence="2">
    <location>
        <position position="278"/>
    </location>
    <ligand>
        <name>Mn(2+)</name>
        <dbReference type="ChEBI" id="CHEBI:29035"/>
    </ligand>
</feature>
<feature type="binding site" evidence="2">
    <location>
        <position position="282"/>
    </location>
    <ligand>
        <name>Mn(2+)</name>
        <dbReference type="ChEBI" id="CHEBI:29035"/>
    </ligand>
</feature>
<feature type="binding site" evidence="2">
    <location>
        <position position="313"/>
    </location>
    <ligand>
        <name>NADP(+)</name>
        <dbReference type="ChEBI" id="CHEBI:58349"/>
    </ligand>
</feature>
<feature type="binding site" evidence="2">
    <location>
        <position position="314"/>
    </location>
    <ligand>
        <name>NADP(+)</name>
        <dbReference type="ChEBI" id="CHEBI:58349"/>
    </ligand>
</feature>
<feature type="binding site" evidence="2">
    <location>
        <position position="315"/>
    </location>
    <ligand>
        <name>NADP(+)</name>
        <dbReference type="ChEBI" id="CHEBI:58349"/>
    </ligand>
</feature>
<feature type="binding site" evidence="2">
    <location>
        <position position="318"/>
    </location>
    <ligand>
        <name>NADP(+)</name>
        <dbReference type="ChEBI" id="CHEBI:58349"/>
    </ligand>
</feature>
<feature type="binding site" evidence="2">
    <location>
        <position position="331"/>
    </location>
    <ligand>
        <name>NADP(+)</name>
        <dbReference type="ChEBI" id="CHEBI:58349"/>
    </ligand>
</feature>
<feature type="site" description="Critical for catalysis" evidence="1">
    <location>
        <position position="142"/>
    </location>
</feature>
<feature type="site" description="Critical for catalysis" evidence="1">
    <location>
        <position position="215"/>
    </location>
</feature>